<dbReference type="EMBL" id="AY099511">
    <property type="protein sequence ID" value="AAM21715.1"/>
    <property type="molecule type" value="mRNA"/>
</dbReference>
<dbReference type="EMBL" id="BC055187">
    <property type="protein sequence ID" value="AAH55187.1"/>
    <property type="molecule type" value="mRNA"/>
</dbReference>
<dbReference type="RefSeq" id="NP_001189439.1">
    <property type="nucleotide sequence ID" value="NM_001202510.1"/>
</dbReference>
<dbReference type="PDB" id="7OYA">
    <property type="method" value="EM"/>
    <property type="resolution" value="3.20 A"/>
    <property type="chains" value="o1=1-106"/>
</dbReference>
<dbReference type="PDB" id="7OYB">
    <property type="method" value="EM"/>
    <property type="resolution" value="2.40 A"/>
    <property type="chains" value="o1=1-106"/>
</dbReference>
<dbReference type="PDBsum" id="7OYA"/>
<dbReference type="PDBsum" id="7OYB"/>
<dbReference type="EMDB" id="EMD-13111"/>
<dbReference type="EMDB" id="EMD-13112"/>
<dbReference type="SMR" id="P61485"/>
<dbReference type="FunCoup" id="P61485">
    <property type="interactions" value="1758"/>
</dbReference>
<dbReference type="STRING" id="7955.ENSDARP00000075363"/>
<dbReference type="PaxDb" id="7955-ENSDARP00000075363"/>
<dbReference type="Ensembl" id="ENSDART00000080919">
    <property type="protein sequence ID" value="ENSDARP00000075363"/>
    <property type="gene ID" value="ENSDARG00000058105"/>
</dbReference>
<dbReference type="GeneID" id="195819"/>
<dbReference type="KEGG" id="dre:195819"/>
<dbReference type="AGR" id="ZFIN:ZDB-GENE-020423-1"/>
<dbReference type="CTD" id="6173"/>
<dbReference type="ZFIN" id="ZDB-GENE-020423-1">
    <property type="gene designation" value="rpl36a"/>
</dbReference>
<dbReference type="eggNOG" id="KOG3464">
    <property type="taxonomic scope" value="Eukaryota"/>
</dbReference>
<dbReference type="HOGENOM" id="CLU_114645_2_1_1"/>
<dbReference type="InParanoid" id="P61485"/>
<dbReference type="OMA" id="CKKHTIH"/>
<dbReference type="OrthoDB" id="2967263at2759"/>
<dbReference type="PhylomeDB" id="P61485"/>
<dbReference type="TreeFam" id="TF300213"/>
<dbReference type="Reactome" id="R-DRE-156827">
    <property type="pathway name" value="L13a-mediated translational silencing of Ceruloplasmin expression"/>
</dbReference>
<dbReference type="Reactome" id="R-DRE-1799339">
    <property type="pathway name" value="SRP-dependent cotranslational protein targeting to membrane"/>
</dbReference>
<dbReference type="Reactome" id="R-DRE-72689">
    <property type="pathway name" value="Formation of a pool of free 40S subunits"/>
</dbReference>
<dbReference type="Reactome" id="R-DRE-975956">
    <property type="pathway name" value="Nonsense Mediated Decay (NMD) independent of the Exon Junction Complex (EJC)"/>
</dbReference>
<dbReference type="Reactome" id="R-DRE-975957">
    <property type="pathway name" value="Nonsense Mediated Decay (NMD) enhanced by the Exon Junction Complex (EJC)"/>
</dbReference>
<dbReference type="PRO" id="PR:P61485"/>
<dbReference type="Proteomes" id="UP000000437">
    <property type="component" value="Alternate scaffold 5"/>
</dbReference>
<dbReference type="Proteomes" id="UP000000437">
    <property type="component" value="Chromosome 5"/>
</dbReference>
<dbReference type="Bgee" id="ENSDARG00000058105">
    <property type="expression patterns" value="Expressed in granulocyte and 24 other cell types or tissues"/>
</dbReference>
<dbReference type="GO" id="GO:0022625">
    <property type="term" value="C:cytosolic large ribosomal subunit"/>
    <property type="evidence" value="ECO:0000318"/>
    <property type="project" value="GO_Central"/>
</dbReference>
<dbReference type="GO" id="GO:0003735">
    <property type="term" value="F:structural constituent of ribosome"/>
    <property type="evidence" value="ECO:0007669"/>
    <property type="project" value="InterPro"/>
</dbReference>
<dbReference type="GO" id="GO:0043009">
    <property type="term" value="P:chordate embryonic development"/>
    <property type="evidence" value="ECO:0000315"/>
    <property type="project" value="ZFIN"/>
</dbReference>
<dbReference type="GO" id="GO:0051726">
    <property type="term" value="P:regulation of cell cycle"/>
    <property type="evidence" value="ECO:0000315"/>
    <property type="project" value="ZFIN"/>
</dbReference>
<dbReference type="GO" id="GO:0006412">
    <property type="term" value="P:translation"/>
    <property type="evidence" value="ECO:0007669"/>
    <property type="project" value="InterPro"/>
</dbReference>
<dbReference type="FunFam" id="3.10.450.80:FF:000001">
    <property type="entry name" value="60S ribosomal protein L44"/>
    <property type="match status" value="1"/>
</dbReference>
<dbReference type="Gene3D" id="3.10.450.80">
    <property type="match status" value="1"/>
</dbReference>
<dbReference type="InterPro" id="IPR000552">
    <property type="entry name" value="Ribosomal_eL44"/>
</dbReference>
<dbReference type="InterPro" id="IPR053708">
    <property type="entry name" value="Ribosomal_LSU_eL42"/>
</dbReference>
<dbReference type="InterPro" id="IPR011332">
    <property type="entry name" value="Ribosomal_zn-bd"/>
</dbReference>
<dbReference type="PANTHER" id="PTHR10369">
    <property type="entry name" value="60S RIBOSOMAL PROTEIN L36A/L44"/>
    <property type="match status" value="1"/>
</dbReference>
<dbReference type="Pfam" id="PF00935">
    <property type="entry name" value="Ribosomal_L44"/>
    <property type="match status" value="1"/>
</dbReference>
<dbReference type="SUPFAM" id="SSF57829">
    <property type="entry name" value="Zn-binding ribosomal proteins"/>
    <property type="match status" value="1"/>
</dbReference>
<dbReference type="PROSITE" id="PS01172">
    <property type="entry name" value="RIBOSOMAL_L44E"/>
    <property type="match status" value="1"/>
</dbReference>
<gene>
    <name type="primary">rpl36a</name>
</gene>
<proteinExistence type="evidence at protein level"/>
<keyword id="KW-0002">3D-structure</keyword>
<keyword id="KW-0963">Cytoplasm</keyword>
<keyword id="KW-1185">Reference proteome</keyword>
<keyword id="KW-0687">Ribonucleoprotein</keyword>
<keyword id="KW-0689">Ribosomal protein</keyword>
<feature type="initiator methionine" description="Removed" evidence="1">
    <location>
        <position position="1"/>
    </location>
</feature>
<feature type="chain" id="PRO_0000149123" description="Large ribosomal subunit protein eL42">
    <location>
        <begin position="2"/>
        <end position="106"/>
    </location>
</feature>
<feature type="region of interest" description="Disordered" evidence="3">
    <location>
        <begin position="26"/>
        <end position="53"/>
    </location>
</feature>
<name>RL36A_DANRE</name>
<accession>P61485</accession>
<accession>Q90VX4</accession>
<protein>
    <recommendedName>
        <fullName evidence="4">Large ribosomal subunit protein eL42</fullName>
    </recommendedName>
    <alternativeName>
        <fullName>60S ribosomal protein L36a</fullName>
    </alternativeName>
</protein>
<reference key="1">
    <citation type="submission" date="2002-04" db="EMBL/GenBank/DDBJ databases">
        <authorList>
            <person name="Amsterdam A."/>
            <person name="Burgess S."/>
            <person name="Golling G."/>
            <person name="Chen W."/>
            <person name="Sun Z."/>
            <person name="Townsend K."/>
            <person name="Farrington S."/>
            <person name="Haldi M."/>
            <person name="Hopkins N."/>
        </authorList>
    </citation>
    <scope>NUCLEOTIDE SEQUENCE [LARGE SCALE MRNA]</scope>
</reference>
<reference key="2">
    <citation type="submission" date="2003-07" db="EMBL/GenBank/DDBJ databases">
        <authorList>
            <consortium name="NIH - Zebrafish Gene Collection (ZGC) project"/>
        </authorList>
    </citation>
    <scope>NUCLEOTIDE SEQUENCE [LARGE SCALE MRNA]</scope>
</reference>
<evidence type="ECO:0000250" key="1"/>
<evidence type="ECO:0000250" key="2">
    <source>
        <dbReference type="UniProtKB" id="P83881"/>
    </source>
</evidence>
<evidence type="ECO:0000256" key="3">
    <source>
        <dbReference type="SAM" id="MobiDB-lite"/>
    </source>
</evidence>
<evidence type="ECO:0000305" key="4"/>
<comment type="function">
    <text evidence="2">Component of the large ribosomal subunit. The ribosome is a large ribonucleoprotein complex responsible for the synthesis of proteins in the cell.</text>
</comment>
<comment type="subunit">
    <text evidence="2">Component of the large ribosomal subunit.</text>
</comment>
<comment type="subcellular location">
    <subcellularLocation>
        <location evidence="2">Cytoplasm</location>
    </subcellularLocation>
</comment>
<comment type="similarity">
    <text evidence="4">Belongs to the eukaryotic ribosomal protein eL42 family.</text>
</comment>
<organism>
    <name type="scientific">Danio rerio</name>
    <name type="common">Zebrafish</name>
    <name type="synonym">Brachydanio rerio</name>
    <dbReference type="NCBI Taxonomy" id="7955"/>
    <lineage>
        <taxon>Eukaryota</taxon>
        <taxon>Metazoa</taxon>
        <taxon>Chordata</taxon>
        <taxon>Craniata</taxon>
        <taxon>Vertebrata</taxon>
        <taxon>Euteleostomi</taxon>
        <taxon>Actinopterygii</taxon>
        <taxon>Neopterygii</taxon>
        <taxon>Teleostei</taxon>
        <taxon>Ostariophysi</taxon>
        <taxon>Cypriniformes</taxon>
        <taxon>Danionidae</taxon>
        <taxon>Danioninae</taxon>
        <taxon>Danio</taxon>
    </lineage>
</organism>
<sequence>MVNVPKTRRTYCKKCKKHQPHKVTQYKKGKDSLYAQGKRRYDRKQSGYGGQTKPIFRKKAKTTKKIVLRLECVEPNCRSKRMLAIKRCKHFELGGDKKRKGQVIQF</sequence>